<dbReference type="EC" id="3.4.24.3"/>
<dbReference type="EMBL" id="X62635">
    <property type="protein sequence ID" value="CAA44501.1"/>
    <property type="molecule type" value="Genomic_DNA"/>
</dbReference>
<dbReference type="PIR" id="S19658">
    <property type="entry name" value="S19658"/>
</dbReference>
<dbReference type="SMR" id="P43154"/>
<dbReference type="STRING" id="663.BAU10_05955"/>
<dbReference type="MEROPS" id="M09.001"/>
<dbReference type="eggNOG" id="COG3291">
    <property type="taxonomic scope" value="Bacteria"/>
</dbReference>
<dbReference type="BRENDA" id="3.4.24.3">
    <property type="organism ID" value="6624"/>
</dbReference>
<dbReference type="GO" id="GO:0005576">
    <property type="term" value="C:extracellular region"/>
    <property type="evidence" value="ECO:0007669"/>
    <property type="project" value="UniProtKB-SubCell"/>
</dbReference>
<dbReference type="GO" id="GO:0004222">
    <property type="term" value="F:metalloendopeptidase activity"/>
    <property type="evidence" value="ECO:0007669"/>
    <property type="project" value="UniProtKB-EC"/>
</dbReference>
<dbReference type="GO" id="GO:0008270">
    <property type="term" value="F:zinc ion binding"/>
    <property type="evidence" value="ECO:0007669"/>
    <property type="project" value="InterPro"/>
</dbReference>
<dbReference type="GO" id="GO:0030574">
    <property type="term" value="P:collagen catabolic process"/>
    <property type="evidence" value="ECO:0007669"/>
    <property type="project" value="UniProtKB-KW"/>
</dbReference>
<dbReference type="GO" id="GO:0006508">
    <property type="term" value="P:proteolysis"/>
    <property type="evidence" value="ECO:0007669"/>
    <property type="project" value="UniProtKB-KW"/>
</dbReference>
<dbReference type="CDD" id="cd00146">
    <property type="entry name" value="PKD"/>
    <property type="match status" value="1"/>
</dbReference>
<dbReference type="Gene3D" id="1.10.390.20">
    <property type="match status" value="1"/>
</dbReference>
<dbReference type="Gene3D" id="2.60.120.380">
    <property type="match status" value="1"/>
</dbReference>
<dbReference type="Gene3D" id="3.40.30.160">
    <property type="entry name" value="Collagenase ColT, N-terminal domain"/>
    <property type="match status" value="1"/>
</dbReference>
<dbReference type="Gene3D" id="2.60.40.10">
    <property type="entry name" value="Immunoglobulins"/>
    <property type="match status" value="1"/>
</dbReference>
<dbReference type="InterPro" id="IPR013783">
    <property type="entry name" value="Ig-like_fold"/>
</dbReference>
<dbReference type="InterPro" id="IPR007280">
    <property type="entry name" value="Peptidase_C_arc/bac"/>
</dbReference>
<dbReference type="InterPro" id="IPR013661">
    <property type="entry name" value="Peptidase_M9_N_dom"/>
</dbReference>
<dbReference type="InterPro" id="IPR002169">
    <property type="entry name" value="Peptidase_M9A/M9B"/>
</dbReference>
<dbReference type="InterPro" id="IPR022409">
    <property type="entry name" value="PKD/Chitinase_dom"/>
</dbReference>
<dbReference type="InterPro" id="IPR000601">
    <property type="entry name" value="PKD_dom"/>
</dbReference>
<dbReference type="InterPro" id="IPR035986">
    <property type="entry name" value="PKD_dom_sf"/>
</dbReference>
<dbReference type="Pfam" id="PF01752">
    <property type="entry name" value="Peptidase_M9"/>
    <property type="match status" value="1"/>
</dbReference>
<dbReference type="Pfam" id="PF08453">
    <property type="entry name" value="Peptidase_M9_N"/>
    <property type="match status" value="1"/>
</dbReference>
<dbReference type="Pfam" id="PF18911">
    <property type="entry name" value="PKD_4"/>
    <property type="match status" value="1"/>
</dbReference>
<dbReference type="Pfam" id="PF04151">
    <property type="entry name" value="PPC"/>
    <property type="match status" value="1"/>
</dbReference>
<dbReference type="PRINTS" id="PR00931">
    <property type="entry name" value="MICOLLPTASE"/>
</dbReference>
<dbReference type="SMART" id="SM00089">
    <property type="entry name" value="PKD"/>
    <property type="match status" value="1"/>
</dbReference>
<dbReference type="SUPFAM" id="SSF49299">
    <property type="entry name" value="PKD domain"/>
    <property type="match status" value="1"/>
</dbReference>
<dbReference type="PROSITE" id="PS50093">
    <property type="entry name" value="PKD"/>
    <property type="match status" value="1"/>
</dbReference>
<dbReference type="PROSITE" id="PS00142">
    <property type="entry name" value="ZINC_PROTEASE"/>
    <property type="match status" value="1"/>
</dbReference>
<proteinExistence type="evidence at protein level"/>
<evidence type="ECO:0000250" key="1"/>
<evidence type="ECO:0000255" key="2"/>
<evidence type="ECO:0000255" key="3">
    <source>
        <dbReference type="PROSITE-ProRule" id="PRU00151"/>
    </source>
</evidence>
<evidence type="ECO:0000255" key="4">
    <source>
        <dbReference type="PROSITE-ProRule" id="PRU10095"/>
    </source>
</evidence>
<evidence type="ECO:0000305" key="5"/>
<organism>
    <name type="scientific">Vibrio alginolyticus</name>
    <dbReference type="NCBI Taxonomy" id="663"/>
    <lineage>
        <taxon>Bacteria</taxon>
        <taxon>Pseudomonadati</taxon>
        <taxon>Pseudomonadota</taxon>
        <taxon>Gammaproteobacteria</taxon>
        <taxon>Vibrionales</taxon>
        <taxon>Vibrionaceae</taxon>
        <taxon>Vibrio</taxon>
    </lineage>
</organism>
<keyword id="KW-0177">Collagen degradation</keyword>
<keyword id="KW-0903">Direct protein sequencing</keyword>
<keyword id="KW-0378">Hydrolase</keyword>
<keyword id="KW-0479">Metal-binding</keyword>
<keyword id="KW-0482">Metalloprotease</keyword>
<keyword id="KW-0645">Protease</keyword>
<keyword id="KW-0964">Secreted</keyword>
<keyword id="KW-0732">Signal</keyword>
<keyword id="KW-0862">Zinc</keyword>
<keyword id="KW-0865">Zymogen</keyword>
<name>COLA_VIBAL</name>
<accession>P43154</accession>
<sequence length="814" mass="89963">MELKILSVAIATTLTSTGVFALSEPVSQVTEQHAHSAHTHGVEFNRVEYQPTATLPIQPSKATRVQSLESLDESSTACDLEALVTESSNQLISEILSQGATCVNQLFSAESRIQESVFSSDHMYNIAKHTTTLAKGYTGGGSDELETLFLYLRAGYYAEFYNDNISFIEWVTPAVKESVDAFVNTASFYENSDRHGKVLSEVIITMDSAGLQHAYLPQVTQWLTRWNDQYAQHWYMRNAVNGVFTILFGGQWNEQFVQIIGNQTDLAKALGDFALRASSIGAEDEFMAANAGRELGRLTKYTGNASSVVKSQLSRIFEQYEMYGRGDAVWLAAADTASYYADCSEFGICNFETELKGLVLSQTYTCSPTIRILSQNMTQEQHAAACSKMGYEEGYFHQSLETGEQPVKDDHNTQLQVNIFDSSTDYGKYAGPIFDISTDNGGMYLEGDPSQPGNIPNFIAYEASYANADHFVWNLEHEYVHYLDGRFDLYGGFSHPTEKIVWWSEGIAEYVAQENDNQAALETILDGSTYTLSEIFETTYDGFDVDRIYRWGYLAVRFMFENHKDDVNQMLVETRQGNWINYKATITQWANLYQSEFEQWQQTLVSNGAPNAVITANSKGKVGESITFSSENSTDPNGKIVSVLWDFGDGSTSTQTKPTHQYGSEGEYSVSLSVTDSEGLTATATHTVVISALGGNDTLPQDCAVQSKVSGGRLTAGEPVCLANQQTIWLSVPAVNESSNLAITTGNGTGNLKLEYSNSGWPDDTNLHGWSDNIGNGECITLSNQSNYWGYVKVSGDFENAAIVVDFDAQKCRQ</sequence>
<feature type="signal peptide" evidence="2">
    <location>
        <begin position="1"/>
        <end position="21"/>
    </location>
</feature>
<feature type="propeptide" id="PRO_0000028676">
    <location>
        <begin position="22"/>
        <end position="75"/>
    </location>
</feature>
<feature type="chain" id="PRO_0000028677" description="Microbial collagenase">
    <location>
        <begin position="76"/>
        <end position="814"/>
    </location>
</feature>
<feature type="domain" description="PKD" evidence="3">
    <location>
        <begin position="609"/>
        <end position="697"/>
    </location>
</feature>
<feature type="active site" evidence="4">
    <location>
        <position position="478"/>
    </location>
</feature>
<feature type="binding site" evidence="4">
    <location>
        <position position="477"/>
    </location>
    <ligand>
        <name>Zn(2+)</name>
        <dbReference type="ChEBI" id="CHEBI:29105"/>
        <note>catalytic</note>
    </ligand>
</feature>
<feature type="binding site" evidence="4">
    <location>
        <position position="481"/>
    </location>
    <ligand>
        <name>Zn(2+)</name>
        <dbReference type="ChEBI" id="CHEBI:29105"/>
        <note>catalytic</note>
    </ligand>
</feature>
<reference key="1">
    <citation type="journal article" date="1992" name="Biochem. J.">
        <title>Structural gene and complete amino acid sequence of Vibrio alginolyticus collagenase.</title>
        <authorList>
            <person name="Takeuchi H."/>
            <person name="Shibano Y."/>
            <person name="Morihara K."/>
            <person name="Fukushima J."/>
            <person name="Inami S."/>
            <person name="Keil B."/>
            <person name="Gilles A.-M."/>
            <person name="Kawamoto S."/>
            <person name="Okuda K."/>
        </authorList>
    </citation>
    <scope>NUCLEOTIDE SEQUENCE [GENOMIC DNA]</scope>
    <scope>PARTIAL PROTEIN SEQUENCE</scope>
    <source>
        <strain>Chemovar. Iophagus</strain>
    </source>
</reference>
<comment type="catalytic activity">
    <reaction>
        <text>Digestion of native collagen in the triple helical region at Xaa-|-Gly bonds. With synthetic peptides, a preference is shown for Gly at P3 and P1', Pro and Ala at P2 and P2', and hydroxyproline, Ala or Arg at P3'.</text>
        <dbReference type="EC" id="3.4.24.3"/>
    </reaction>
</comment>
<comment type="cofactor">
    <cofactor evidence="1">
        <name>Zn(2+)</name>
        <dbReference type="ChEBI" id="CHEBI:29105"/>
    </cofactor>
    <text evidence="1">Binds 1 zinc ion.</text>
</comment>
<comment type="subcellular location">
    <subcellularLocation>
        <location>Secreted</location>
    </subcellularLocation>
</comment>
<comment type="PTM">
    <text>Proteolytic cleavage might yield three different active forms.</text>
</comment>
<comment type="similarity">
    <text evidence="5">Belongs to the peptidase M9A family.</text>
</comment>
<protein>
    <recommendedName>
        <fullName>Microbial collagenase</fullName>
        <ecNumber>3.4.24.3</ecNumber>
    </recommendedName>
</protein>